<organism>
    <name type="scientific">Pectobacterium carotovorum subsp. carotovorum (strain PC1)</name>
    <dbReference type="NCBI Taxonomy" id="561230"/>
    <lineage>
        <taxon>Bacteria</taxon>
        <taxon>Pseudomonadati</taxon>
        <taxon>Pseudomonadota</taxon>
        <taxon>Gammaproteobacteria</taxon>
        <taxon>Enterobacterales</taxon>
        <taxon>Pectobacteriaceae</taxon>
        <taxon>Pectobacterium</taxon>
    </lineage>
</organism>
<reference key="1">
    <citation type="submission" date="2009-07" db="EMBL/GenBank/DDBJ databases">
        <title>Complete sequence of Pectobacterium carotovorum subsp. carotovorum PC1.</title>
        <authorList>
            <consortium name="US DOE Joint Genome Institute"/>
            <person name="Lucas S."/>
            <person name="Copeland A."/>
            <person name="Lapidus A."/>
            <person name="Glavina del Rio T."/>
            <person name="Tice H."/>
            <person name="Bruce D."/>
            <person name="Goodwin L."/>
            <person name="Pitluck S."/>
            <person name="Munk A.C."/>
            <person name="Brettin T."/>
            <person name="Detter J.C."/>
            <person name="Han C."/>
            <person name="Tapia R."/>
            <person name="Larimer F."/>
            <person name="Land M."/>
            <person name="Hauser L."/>
            <person name="Kyrpides N."/>
            <person name="Mikhailova N."/>
            <person name="Balakrishnan V."/>
            <person name="Glasner J."/>
            <person name="Perna N.T."/>
        </authorList>
    </citation>
    <scope>NUCLEOTIDE SEQUENCE [LARGE SCALE GENOMIC DNA]</scope>
    <source>
        <strain>PC1</strain>
    </source>
</reference>
<proteinExistence type="inferred from homology"/>
<name>Y597_PECCP</name>
<accession>C6DKL5</accession>
<feature type="chain" id="PRO_1000213341" description="UPF0213 protein PC1_0597">
    <location>
        <begin position="1"/>
        <end position="99"/>
    </location>
</feature>
<feature type="domain" description="GIY-YIG" evidence="1">
    <location>
        <begin position="8"/>
        <end position="83"/>
    </location>
</feature>
<dbReference type="EMBL" id="CP001657">
    <property type="protein sequence ID" value="ACT11652.1"/>
    <property type="molecule type" value="Genomic_DNA"/>
</dbReference>
<dbReference type="RefSeq" id="WP_012773299.1">
    <property type="nucleotide sequence ID" value="NC_012917.1"/>
</dbReference>
<dbReference type="SMR" id="C6DKL5"/>
<dbReference type="STRING" id="561230.PC1_0597"/>
<dbReference type="KEGG" id="pct:PC1_0597"/>
<dbReference type="eggNOG" id="COG2827">
    <property type="taxonomic scope" value="Bacteria"/>
</dbReference>
<dbReference type="HOGENOM" id="CLU_135650_0_0_6"/>
<dbReference type="OrthoDB" id="9797095at2"/>
<dbReference type="Proteomes" id="UP000002736">
    <property type="component" value="Chromosome"/>
</dbReference>
<dbReference type="CDD" id="cd10456">
    <property type="entry name" value="GIY-YIG_UPF0213"/>
    <property type="match status" value="1"/>
</dbReference>
<dbReference type="Gene3D" id="3.40.1440.10">
    <property type="entry name" value="GIY-YIG endonuclease"/>
    <property type="match status" value="1"/>
</dbReference>
<dbReference type="HAMAP" id="MF_01029">
    <property type="entry name" value="UPF0213"/>
    <property type="match status" value="1"/>
</dbReference>
<dbReference type="InterPro" id="IPR000305">
    <property type="entry name" value="GIY-YIG_endonuc"/>
</dbReference>
<dbReference type="InterPro" id="IPR035901">
    <property type="entry name" value="GIY-YIG_endonuc_sf"/>
</dbReference>
<dbReference type="InterPro" id="IPR050190">
    <property type="entry name" value="UPF0213_domain"/>
</dbReference>
<dbReference type="InterPro" id="IPR022992">
    <property type="entry name" value="UPF0213_GIY-YIG_endonuc"/>
</dbReference>
<dbReference type="PANTHER" id="PTHR34477">
    <property type="entry name" value="UPF0213 PROTEIN YHBQ"/>
    <property type="match status" value="1"/>
</dbReference>
<dbReference type="PANTHER" id="PTHR34477:SF1">
    <property type="entry name" value="UPF0213 PROTEIN YHBQ"/>
    <property type="match status" value="1"/>
</dbReference>
<dbReference type="Pfam" id="PF01541">
    <property type="entry name" value="GIY-YIG"/>
    <property type="match status" value="1"/>
</dbReference>
<dbReference type="SUPFAM" id="SSF82771">
    <property type="entry name" value="GIY-YIG endonuclease"/>
    <property type="match status" value="1"/>
</dbReference>
<dbReference type="PROSITE" id="PS50164">
    <property type="entry name" value="GIY_YIG"/>
    <property type="match status" value="1"/>
</dbReference>
<protein>
    <recommendedName>
        <fullName evidence="1">UPF0213 protein PC1_0597</fullName>
    </recommendedName>
</protein>
<evidence type="ECO:0000255" key="1">
    <source>
        <dbReference type="HAMAP-Rule" id="MF_01029"/>
    </source>
</evidence>
<comment type="similarity">
    <text evidence="1">Belongs to the UPF0213 family.</text>
</comment>
<sequence length="99" mass="11404">MTEHIEHPQWYLYILRTITGALYTGITTDVSRRLNQHQTGKGAKALRGKGELTLVFHCLAGDRSNALKLEYRIKQLSKNQKERLVQDQPQTLCISDTMY</sequence>
<gene>
    <name type="ordered locus">PC1_0597</name>
</gene>